<comment type="function">
    <text evidence="2 3">Inhibitory receptor that acts as a critical regulator of hematopoietic lineage differentiation, megakaryocyte function and platelet production. Inhibits platelet aggregation and activation by agonists such as ADP and collagen-related peptide. This regulation of megakaryocate function as well as platelet production ann activation is done through the inhibition (via the 2 ITIM motifs) of the receptors CLEC1B and GP6:FcRgamma signaling. Appears to operate in a calcium-independent manner.</text>
</comment>
<comment type="subunit">
    <text evidence="2 3">Interacts (via ITIM motif) with PTPN6 and PTPN11. Binds to heparin.</text>
</comment>
<comment type="subcellular location">
    <subcellularLocation>
        <location evidence="3">Cell membrane</location>
        <topology evidence="3">Single-pass type I membrane protein</topology>
    </subcellularLocation>
</comment>
<comment type="domain">
    <text evidence="2">Contains both a transmembrane region and 2 copies of a cytoplasmic motif that is referred to as the immunoreceptor tyrosine-based inhibitor motif (ITIM). This motif is involved in modulation of cellular responses. The phosphorylated ITIM motif can bind the SH2 domain of several SH2-containing phosphatases. The 2 ITIM motifs of isoform B are required for the inhibition of CLEC1B and GP6:FCER1G signaling and platelet activation.</text>
</comment>
<comment type="PTM">
    <text evidence="2 3">N-glycosylated.</text>
</comment>
<comment type="PTM">
    <text evidence="3">May be O-glycosylated.</text>
</comment>
<comment type="PTM">
    <text evidence="2">Phosphorylated.</text>
</comment>
<gene>
    <name evidence="6" type="primary">Mpig6b</name>
    <name evidence="6" type="synonym">G6b</name>
</gene>
<name>G6B_RAT</name>
<proteinExistence type="inferred from homology"/>
<keyword id="KW-1003">Cell membrane</keyword>
<keyword id="KW-0325">Glycoprotein</keyword>
<keyword id="KW-0358">Heparin-binding</keyword>
<keyword id="KW-0472">Membrane</keyword>
<keyword id="KW-0597">Phosphoprotein</keyword>
<keyword id="KW-0675">Receptor</keyword>
<keyword id="KW-1185">Reference proteome</keyword>
<keyword id="KW-0732">Signal</keyword>
<keyword id="KW-0812">Transmembrane</keyword>
<keyword id="KW-1133">Transmembrane helix</keyword>
<accession>Q6MG59</accession>
<sequence>MALVLQLLPLLLSKVQGNPEVSLEGNPGDRVNLSCIGVSDPTRWAWAPSFPACKGLSKGRRPILWASSSGTPTVLQHFSGRLRSLDTGIKRLELLLSAGDSGTFFCKGRQENESRTVIQVLGDKAGCRPSGSTHGSEYSKVLIPLLGFGLVLGLGALGLVWWRRSCVPPSHIAPVINAEPQRPLEQDSKISGHLDQEPNLHYADLDHSVLRRHRRMSALVPGDASTVYAVVV</sequence>
<dbReference type="EMBL" id="BX883045">
    <property type="protein sequence ID" value="CAE83987.1"/>
    <property type="molecule type" value="Genomic_DNA"/>
</dbReference>
<dbReference type="RefSeq" id="NP_001003976.1">
    <property type="nucleotide sequence ID" value="NM_001003976.1"/>
</dbReference>
<dbReference type="SMR" id="Q6MG59"/>
<dbReference type="FunCoup" id="Q6MG59">
    <property type="interactions" value="8"/>
</dbReference>
<dbReference type="STRING" id="10116.ENSRNOP00000068435"/>
<dbReference type="GlyCosmos" id="Q6MG59">
    <property type="glycosylation" value="2 sites, No reported glycans"/>
</dbReference>
<dbReference type="GlyGen" id="Q6MG59">
    <property type="glycosylation" value="2 sites"/>
</dbReference>
<dbReference type="PhosphoSitePlus" id="Q6MG59"/>
<dbReference type="PaxDb" id="10116-ENSRNOP00000068435"/>
<dbReference type="Ensembl" id="ENSRNOT00000037191.4">
    <property type="protein sequence ID" value="ENSRNOP00000033088.2"/>
    <property type="gene ID" value="ENSRNOG00000026936.7"/>
</dbReference>
<dbReference type="UCSC" id="RGD:1303269">
    <property type="organism name" value="rat"/>
</dbReference>
<dbReference type="AGR" id="RGD:1303269"/>
<dbReference type="RGD" id="1303269">
    <property type="gene designation" value="Mpig6b"/>
</dbReference>
<dbReference type="eggNOG" id="ENOG502TEAD">
    <property type="taxonomic scope" value="Eukaryota"/>
</dbReference>
<dbReference type="GeneTree" id="ENSGT00390000017793"/>
<dbReference type="InParanoid" id="Q6MG59"/>
<dbReference type="PhylomeDB" id="Q6MG59"/>
<dbReference type="TreeFam" id="TF337394"/>
<dbReference type="Reactome" id="R-RNO-114604">
    <property type="pathway name" value="GPVI-mediated activation cascade"/>
</dbReference>
<dbReference type="PRO" id="PR:Q6MG59"/>
<dbReference type="Proteomes" id="UP000002494">
    <property type="component" value="Chromosome 20"/>
</dbReference>
<dbReference type="Bgee" id="ENSRNOG00000026936">
    <property type="expression patterns" value="Expressed in ovary and 14 other cell types or tissues"/>
</dbReference>
<dbReference type="ExpressionAtlas" id="Q6MG59">
    <property type="expression patterns" value="baseline"/>
</dbReference>
<dbReference type="GO" id="GO:0005886">
    <property type="term" value="C:plasma membrane"/>
    <property type="evidence" value="ECO:0000266"/>
    <property type="project" value="RGD"/>
</dbReference>
<dbReference type="GO" id="GO:0008201">
    <property type="term" value="F:heparin binding"/>
    <property type="evidence" value="ECO:0007669"/>
    <property type="project" value="UniProtKB-KW"/>
</dbReference>
<dbReference type="GO" id="GO:0007596">
    <property type="term" value="P:blood coagulation"/>
    <property type="evidence" value="ECO:0000250"/>
    <property type="project" value="UniProtKB"/>
</dbReference>
<dbReference type="GO" id="GO:0030218">
    <property type="term" value="P:erythrocyte differentiation"/>
    <property type="evidence" value="ECO:0000250"/>
    <property type="project" value="UniProtKB"/>
</dbReference>
<dbReference type="GO" id="GO:0007229">
    <property type="term" value="P:integrin-mediated signaling pathway"/>
    <property type="evidence" value="ECO:0000250"/>
    <property type="project" value="UniProtKB"/>
</dbReference>
<dbReference type="GO" id="GO:0035855">
    <property type="term" value="P:megakaryocyte development"/>
    <property type="evidence" value="ECO:0000250"/>
    <property type="project" value="UniProtKB"/>
</dbReference>
<dbReference type="GO" id="GO:0030219">
    <property type="term" value="P:megakaryocyte differentiation"/>
    <property type="evidence" value="ECO:0000250"/>
    <property type="project" value="UniProtKB"/>
</dbReference>
<dbReference type="GO" id="GO:0009968">
    <property type="term" value="P:negative regulation of signal transduction"/>
    <property type="evidence" value="ECO:0000250"/>
    <property type="project" value="UniProtKB"/>
</dbReference>
<dbReference type="GO" id="GO:0030220">
    <property type="term" value="P:platelet formation"/>
    <property type="evidence" value="ECO:0000250"/>
    <property type="project" value="UniProtKB"/>
</dbReference>
<dbReference type="InterPro" id="IPR028070">
    <property type="entry name" value="G6B"/>
</dbReference>
<dbReference type="InterPro" id="IPR048308">
    <property type="entry name" value="G6B_V-set"/>
</dbReference>
<dbReference type="PANTHER" id="PTHR37347">
    <property type="entry name" value="MEGAKARYOCYTE AND PLATELET INHIBITORY RECEPTOR G6B"/>
    <property type="match status" value="1"/>
</dbReference>
<dbReference type="PANTHER" id="PTHR37347:SF1">
    <property type="entry name" value="MEGAKARYOCYTE AND PLATELET INHIBITORY RECEPTOR G6B"/>
    <property type="match status" value="1"/>
</dbReference>
<dbReference type="Pfam" id="PF15096">
    <property type="entry name" value="G6B"/>
    <property type="match status" value="1"/>
</dbReference>
<organism>
    <name type="scientific">Rattus norvegicus</name>
    <name type="common">Rat</name>
    <dbReference type="NCBI Taxonomy" id="10116"/>
    <lineage>
        <taxon>Eukaryota</taxon>
        <taxon>Metazoa</taxon>
        <taxon>Chordata</taxon>
        <taxon>Craniata</taxon>
        <taxon>Vertebrata</taxon>
        <taxon>Euteleostomi</taxon>
        <taxon>Mammalia</taxon>
        <taxon>Eutheria</taxon>
        <taxon>Euarchontoglires</taxon>
        <taxon>Glires</taxon>
        <taxon>Rodentia</taxon>
        <taxon>Myomorpha</taxon>
        <taxon>Muroidea</taxon>
        <taxon>Muridae</taxon>
        <taxon>Murinae</taxon>
        <taxon>Rattus</taxon>
    </lineage>
</organism>
<protein>
    <recommendedName>
        <fullName evidence="6">Megakaryocyte and platelet inhibitory receptor G6b</fullName>
    </recommendedName>
    <alternativeName>
        <fullName evidence="5">Protein G6b</fullName>
    </alternativeName>
</protein>
<evidence type="ECO:0000250" key="1"/>
<evidence type="ECO:0000250" key="2">
    <source>
        <dbReference type="UniProtKB" id="D7PDD4"/>
    </source>
</evidence>
<evidence type="ECO:0000250" key="3">
    <source>
        <dbReference type="UniProtKB" id="O95866"/>
    </source>
</evidence>
<evidence type="ECO:0000255" key="4"/>
<evidence type="ECO:0000305" key="5"/>
<evidence type="ECO:0000312" key="6">
    <source>
        <dbReference type="RGD" id="1303269"/>
    </source>
</evidence>
<reference key="1">
    <citation type="journal article" date="2004" name="Genome Res.">
        <title>The genomic sequence and comparative analysis of the rat major histocompatibility complex.</title>
        <authorList>
            <person name="Hurt P."/>
            <person name="Walter L."/>
            <person name="Sudbrak R."/>
            <person name="Klages S."/>
            <person name="Mueller I."/>
            <person name="Shiina T."/>
            <person name="Inoko H."/>
            <person name="Lehrach H."/>
            <person name="Guenther E."/>
            <person name="Reinhardt R."/>
            <person name="Himmelbauer H."/>
        </authorList>
    </citation>
    <scope>NUCLEOTIDE SEQUENCE [LARGE SCALE GENOMIC DNA]</scope>
    <source>
        <strain>Brown Norway</strain>
    </source>
</reference>
<feature type="signal peptide" evidence="1">
    <location>
        <begin position="1"/>
        <end position="17"/>
    </location>
</feature>
<feature type="chain" id="PRO_0000021313" description="Megakaryocyte and platelet inhibitory receptor G6b">
    <location>
        <begin position="18"/>
        <end position="232"/>
    </location>
</feature>
<feature type="topological domain" description="Extracellular" evidence="4">
    <location>
        <begin position="18"/>
        <end position="140"/>
    </location>
</feature>
<feature type="transmembrane region" description="Helical" evidence="4">
    <location>
        <begin position="141"/>
        <end position="161"/>
    </location>
</feature>
<feature type="topological domain" description="Cytoplasmic" evidence="4">
    <location>
        <begin position="162"/>
        <end position="232"/>
    </location>
</feature>
<feature type="short sequence motif" description="ITIM motif" evidence="3">
    <location>
        <begin position="200"/>
        <end position="205"/>
    </location>
</feature>
<feature type="short sequence motif" description="ITIM motif" evidence="3">
    <location>
        <begin position="226"/>
        <end position="231"/>
    </location>
</feature>
<feature type="modified residue" description="Phosphotyrosine" evidence="3">
    <location>
        <position position="202"/>
    </location>
</feature>
<feature type="glycosylation site" description="N-linked (GlcNAc...) asparagine" evidence="4">
    <location>
        <position position="32"/>
    </location>
</feature>
<feature type="glycosylation site" description="N-linked (GlcNAc...) asparagine" evidence="4">
    <location>
        <position position="112"/>
    </location>
</feature>